<evidence type="ECO:0000255" key="1">
    <source>
        <dbReference type="HAMAP-Rule" id="MF_00439"/>
    </source>
</evidence>
<evidence type="ECO:0000269" key="2">
    <source>
    </source>
</evidence>
<evidence type="ECO:0000305" key="3"/>
<dbReference type="EMBL" id="AP000423">
    <property type="protein sequence ID" value="BAA84386.1"/>
    <property type="status" value="ALT_SEQ"/>
    <property type="molecule type" value="Genomic_DNA"/>
</dbReference>
<dbReference type="RefSeq" id="NP_051060.2">
    <property type="nucleotide sequence ID" value="NC_000932.1"/>
</dbReference>
<dbReference type="SMR" id="P61843"/>
<dbReference type="FunCoup" id="P61843">
    <property type="interactions" value="26"/>
</dbReference>
<dbReference type="STRING" id="3702.P61843"/>
<dbReference type="PaxDb" id="3702-ATCG00360.1"/>
<dbReference type="ProteomicsDB" id="242310"/>
<dbReference type="GeneID" id="844767"/>
<dbReference type="KEGG" id="ath:ArthCp023"/>
<dbReference type="Araport" id="ATCG00360"/>
<dbReference type="TAIR" id="ATCG00360"/>
<dbReference type="eggNOG" id="KOG1124">
    <property type="taxonomic scope" value="Eukaryota"/>
</dbReference>
<dbReference type="HOGENOM" id="CLU_141248_0_0_1"/>
<dbReference type="InParanoid" id="P61843"/>
<dbReference type="PRO" id="PR:P61843"/>
<dbReference type="Proteomes" id="UP000006548">
    <property type="component" value="Chloroplast Pltd"/>
</dbReference>
<dbReference type="ExpressionAtlas" id="P61843">
    <property type="expression patterns" value="baseline and differential"/>
</dbReference>
<dbReference type="GO" id="GO:0009535">
    <property type="term" value="C:chloroplast thylakoid membrane"/>
    <property type="evidence" value="ECO:0007669"/>
    <property type="project" value="UniProtKB-SubCell"/>
</dbReference>
<dbReference type="GO" id="GO:0048564">
    <property type="term" value="P:photosystem I assembly"/>
    <property type="evidence" value="ECO:0000318"/>
    <property type="project" value="GO_Central"/>
</dbReference>
<dbReference type="FunFam" id="1.25.40.10:FF:000004">
    <property type="entry name" value="Photosystem I assembly protein Ycf3"/>
    <property type="match status" value="1"/>
</dbReference>
<dbReference type="Gene3D" id="1.25.40.10">
    <property type="entry name" value="Tetratricopeptide repeat domain"/>
    <property type="match status" value="1"/>
</dbReference>
<dbReference type="HAMAP" id="MF_00439">
    <property type="entry name" value="Ycf3"/>
    <property type="match status" value="1"/>
</dbReference>
<dbReference type="InterPro" id="IPR022818">
    <property type="entry name" value="PSI_Ycf3_assembly"/>
</dbReference>
<dbReference type="InterPro" id="IPR011990">
    <property type="entry name" value="TPR-like_helical_dom_sf"/>
</dbReference>
<dbReference type="InterPro" id="IPR019734">
    <property type="entry name" value="TPR_rpt"/>
</dbReference>
<dbReference type="InterPro" id="IPR051685">
    <property type="entry name" value="Ycf3/AcsC/BcsC/TPR_MFPF"/>
</dbReference>
<dbReference type="NCBIfam" id="NF002725">
    <property type="entry name" value="PRK02603.1"/>
    <property type="match status" value="1"/>
</dbReference>
<dbReference type="PANTHER" id="PTHR44943">
    <property type="entry name" value="CELLULOSE SYNTHASE OPERON PROTEIN C"/>
    <property type="match status" value="1"/>
</dbReference>
<dbReference type="PANTHER" id="PTHR44943:SF8">
    <property type="entry name" value="TPR REPEAT-CONTAINING PROTEIN MJ0263"/>
    <property type="match status" value="1"/>
</dbReference>
<dbReference type="Pfam" id="PF00515">
    <property type="entry name" value="TPR_1"/>
    <property type="match status" value="1"/>
</dbReference>
<dbReference type="SMART" id="SM00028">
    <property type="entry name" value="TPR"/>
    <property type="match status" value="3"/>
</dbReference>
<dbReference type="SUPFAM" id="SSF48452">
    <property type="entry name" value="TPR-like"/>
    <property type="match status" value="1"/>
</dbReference>
<dbReference type="PROSITE" id="PS50005">
    <property type="entry name" value="TPR"/>
    <property type="match status" value="3"/>
</dbReference>
<dbReference type="PROSITE" id="PS50293">
    <property type="entry name" value="TPR_REGION"/>
    <property type="match status" value="1"/>
</dbReference>
<feature type="chain" id="PRO_0000217792" description="Photosystem I assembly protein Ycf3">
    <location>
        <begin position="1"/>
        <end position="168"/>
    </location>
</feature>
<feature type="repeat" description="TPR 1">
    <location>
        <begin position="35"/>
        <end position="68"/>
    </location>
</feature>
<feature type="repeat" description="TPR 2">
    <location>
        <begin position="72"/>
        <end position="105"/>
    </location>
</feature>
<feature type="repeat" description="TPR 3">
    <location>
        <begin position="120"/>
        <end position="153"/>
    </location>
</feature>
<proteinExistence type="evidence at protein level"/>
<gene>
    <name evidence="1" type="primary">ycf3</name>
    <name type="ordered locus">AtCg00360</name>
</gene>
<reference key="1">
    <citation type="journal article" date="1999" name="DNA Res.">
        <title>Complete structure of the chloroplast genome of Arabidopsis thaliana.</title>
        <authorList>
            <person name="Sato S."/>
            <person name="Nakamura Y."/>
            <person name="Kaneko T."/>
            <person name="Asamizu E."/>
            <person name="Tabata S."/>
        </authorList>
    </citation>
    <scope>NUCLEOTIDE SEQUENCE [LARGE SCALE GENOMIC DNA]</scope>
    <source>
        <strain>cv. Columbia</strain>
    </source>
</reference>
<reference key="2">
    <citation type="journal article" date="2010" name="Plant Cell">
        <title>Y3IP1, a nucleus-encoded thylakoid protein, cooperates with the plastid-encoded Ycf3 protein in photosystem I assembly of tobacco and Arabidopsis.</title>
        <authorList>
            <person name="Albus C.A."/>
            <person name="Ruf S."/>
            <person name="Schottler M.A."/>
            <person name="Lein W."/>
            <person name="Kehr J."/>
            <person name="Bock R."/>
        </authorList>
    </citation>
    <scope>INTERACTION WITH Y3IP1</scope>
</reference>
<sequence length="168" mass="19536">MPRSRINGNFIDKTFTIVADILLRVIPTTSGEKEAFTYYRDGMSAQSEGNYAEALQNYYEAMRLEIDPYDRSYILYNIGLIHTSNGEHTKALEYYFRALERNPFLPQAFNNMAVICHYRGEQAIQQGDSEMAEAWFAQAAEYWKQAITLTPGNYIEAQNWLTITRRFE</sequence>
<accession>P61843</accession>
<accession>P56787</accession>
<accession>Q9XQP0</accession>
<protein>
    <recommendedName>
        <fullName evidence="1">Photosystem I assembly protein Ycf3</fullName>
    </recommendedName>
</protein>
<organism>
    <name type="scientific">Arabidopsis thaliana</name>
    <name type="common">Mouse-ear cress</name>
    <dbReference type="NCBI Taxonomy" id="3702"/>
    <lineage>
        <taxon>Eukaryota</taxon>
        <taxon>Viridiplantae</taxon>
        <taxon>Streptophyta</taxon>
        <taxon>Embryophyta</taxon>
        <taxon>Tracheophyta</taxon>
        <taxon>Spermatophyta</taxon>
        <taxon>Magnoliopsida</taxon>
        <taxon>eudicotyledons</taxon>
        <taxon>Gunneridae</taxon>
        <taxon>Pentapetalae</taxon>
        <taxon>rosids</taxon>
        <taxon>malvids</taxon>
        <taxon>Brassicales</taxon>
        <taxon>Brassicaceae</taxon>
        <taxon>Camelineae</taxon>
        <taxon>Arabidopsis</taxon>
    </lineage>
</organism>
<name>YCF3_ARATH</name>
<geneLocation type="chloroplast"/>
<comment type="function">
    <text evidence="1">Essential for the assembly of the photosystem I (PSI) complex. May act as a chaperone-like factor to guide the assembly of the PSI subunits.</text>
</comment>
<comment type="subunit">
    <text evidence="2">Interacts with Y3IP1.</text>
</comment>
<comment type="subcellular location">
    <subcellularLocation>
        <location evidence="1">Plastid</location>
        <location evidence="1">Chloroplast thylakoid membrane</location>
        <topology evidence="1">Peripheral membrane protein</topology>
    </subcellularLocation>
</comment>
<comment type="similarity">
    <text evidence="1">Belongs to the Ycf3 family.</text>
</comment>
<comment type="sequence caution" evidence="3">
    <conflict type="erroneous gene model prediction">
        <sequence resource="EMBL-CDS" id="BAA84386"/>
    </conflict>
</comment>
<keyword id="KW-0150">Chloroplast</keyword>
<keyword id="KW-0472">Membrane</keyword>
<keyword id="KW-0602">Photosynthesis</keyword>
<keyword id="KW-0934">Plastid</keyword>
<keyword id="KW-1185">Reference proteome</keyword>
<keyword id="KW-0677">Repeat</keyword>
<keyword id="KW-0793">Thylakoid</keyword>
<keyword id="KW-0802">TPR repeat</keyword>